<name>FZD5_XENLA</name>
<organism>
    <name type="scientific">Xenopus laevis</name>
    <name type="common">African clawed frog</name>
    <dbReference type="NCBI Taxonomy" id="8355"/>
    <lineage>
        <taxon>Eukaryota</taxon>
        <taxon>Metazoa</taxon>
        <taxon>Chordata</taxon>
        <taxon>Craniata</taxon>
        <taxon>Vertebrata</taxon>
        <taxon>Euteleostomi</taxon>
        <taxon>Amphibia</taxon>
        <taxon>Batrachia</taxon>
        <taxon>Anura</taxon>
        <taxon>Pipoidea</taxon>
        <taxon>Pipidae</taxon>
        <taxon>Xenopodinae</taxon>
        <taxon>Xenopus</taxon>
        <taxon>Xenopus</taxon>
    </lineage>
</organism>
<comment type="function">
    <text evidence="2 6">Receptor for Wnt proteins that functions in the canonical Wnt/beta-catenin signaling pathway. The canonical Wnt/beta-catenin signaling pathway leads to the activation of disheveled proteins, inhibition of GSK-3 kinase, nuclear accumulation of beta-catenin and activation of Wnt target genes (By similarity). A second signaling pathway involving PKC and calcium fluxes has been seen for some family members, but it is not yet clear if it represents a distinct pathway or if it can be integrated in the canonical pathway, as PKC seems to be required for Wnt-mediated inactivation of GSK-3 kinase. Both pathways seem to involve interactions with G-proteins. May be involved in transduction and intercellular transmission of polarity information during tissue morphogenesis and/or in differentiated tissues (Probable).</text>
</comment>
<comment type="subcellular location">
    <subcellularLocation>
        <location evidence="2">Cell membrane</location>
        <topology evidence="2">Multi-pass membrane protein</topology>
    </subcellularLocation>
    <subcellularLocation>
        <location evidence="2">Golgi apparatus membrane</location>
        <topology evidence="2">Multi-pass membrane protein</topology>
    </subcellularLocation>
    <text evidence="2">Localized at the plasma membrane and also found at the Golgi.</text>
</comment>
<comment type="tissue specificity">
    <text evidence="5">Expressed in retina.</text>
</comment>
<comment type="developmental stage">
    <text evidence="5">First detected at the late neurula stage in retinal primordia. Throughout the tailbud stage, expressed exclusively in the neural retina within the optic vesicles. During tadpole stage, expression becomes restricted to the ciliary marginal zone.</text>
</comment>
<comment type="domain">
    <text evidence="1">Lys-Thr-X-X-X-Trp motif interacts with the PDZ domain of Dvl (Disheveled) family members and is involved in the activation of the Wnt/beta-catenin signaling pathway.</text>
</comment>
<comment type="domain">
    <text evidence="1">The FZ domain is involved in binding with Wnt ligands.</text>
</comment>
<comment type="similarity">
    <text evidence="6">Belongs to the G-protein coupled receptor Fz/Smo family.</text>
</comment>
<keyword id="KW-1003">Cell membrane</keyword>
<keyword id="KW-0217">Developmental protein</keyword>
<keyword id="KW-1015">Disulfide bond</keyword>
<keyword id="KW-0297">G-protein coupled receptor</keyword>
<keyword id="KW-0325">Glycoprotein</keyword>
<keyword id="KW-0333">Golgi apparatus</keyword>
<keyword id="KW-0472">Membrane</keyword>
<keyword id="KW-0675">Receptor</keyword>
<keyword id="KW-1185">Reference proteome</keyword>
<keyword id="KW-0732">Signal</keyword>
<keyword id="KW-0807">Transducer</keyword>
<keyword id="KW-0812">Transmembrane</keyword>
<keyword id="KW-1133">Transmembrane helix</keyword>
<keyword id="KW-0879">Wnt signaling pathway</keyword>
<feature type="signal peptide" evidence="3">
    <location>
        <begin position="1"/>
        <end position="26"/>
    </location>
</feature>
<feature type="chain" id="PRO_0000012992" description="Frizzled-5">
    <location>
        <begin position="27"/>
        <end position="559"/>
    </location>
</feature>
<feature type="topological domain" description="Extracellular" evidence="3">
    <location>
        <begin position="27"/>
        <end position="220"/>
    </location>
</feature>
<feature type="transmembrane region" description="Helical; Name=1" evidence="3">
    <location>
        <begin position="221"/>
        <end position="241"/>
    </location>
</feature>
<feature type="topological domain" description="Cytoplasmic" evidence="3">
    <location>
        <begin position="242"/>
        <end position="257"/>
    </location>
</feature>
<feature type="transmembrane region" description="Helical; Name=2" evidence="3">
    <location>
        <begin position="258"/>
        <end position="278"/>
    </location>
</feature>
<feature type="topological domain" description="Extracellular" evidence="3">
    <location>
        <begin position="279"/>
        <end position="301"/>
    </location>
</feature>
<feature type="transmembrane region" description="Helical; Name=3" evidence="3">
    <location>
        <begin position="302"/>
        <end position="322"/>
    </location>
</feature>
<feature type="topological domain" description="Cytoplasmic" evidence="3">
    <location>
        <begin position="323"/>
        <end position="343"/>
    </location>
</feature>
<feature type="transmembrane region" description="Helical; Name=4" evidence="3">
    <location>
        <begin position="344"/>
        <end position="364"/>
    </location>
</feature>
<feature type="topological domain" description="Extracellular" evidence="3">
    <location>
        <begin position="365"/>
        <end position="387"/>
    </location>
</feature>
<feature type="transmembrane region" description="Helical; Name=5" evidence="3">
    <location>
        <begin position="388"/>
        <end position="408"/>
    </location>
</feature>
<feature type="topological domain" description="Cytoplasmic" evidence="3">
    <location>
        <begin position="409"/>
        <end position="434"/>
    </location>
</feature>
<feature type="transmembrane region" description="Helical; Name=6" evidence="3">
    <location>
        <begin position="435"/>
        <end position="455"/>
    </location>
</feature>
<feature type="topological domain" description="Extracellular" evidence="3">
    <location>
        <begin position="456"/>
        <end position="483"/>
    </location>
</feature>
<feature type="transmembrane region" description="Helical; Name=7" evidence="3">
    <location>
        <begin position="484"/>
        <end position="504"/>
    </location>
</feature>
<feature type="topological domain" description="Cytoplasmic" evidence="3">
    <location>
        <begin position="505"/>
        <end position="559"/>
    </location>
</feature>
<feature type="domain" description="FZ" evidence="4">
    <location>
        <begin position="28"/>
        <end position="149"/>
    </location>
</feature>
<feature type="short sequence motif" description="Lys-Thr-X-X-X-Trp motif, mediates interaction with the PDZ domain of Dvl family members" evidence="1">
    <location>
        <begin position="507"/>
        <end position="512"/>
    </location>
</feature>
<feature type="short sequence motif" description="PDZ-binding">
    <location>
        <begin position="557"/>
        <end position="559"/>
    </location>
</feature>
<feature type="glycosylation site" description="N-linked (GlcNAc...) asparagine" evidence="3">
    <location>
        <position position="47"/>
    </location>
</feature>
<feature type="glycosylation site" description="N-linked (GlcNAc...) asparagine" evidence="3">
    <location>
        <position position="150"/>
    </location>
</feature>
<feature type="glycosylation site" description="N-linked (GlcNAc...) asparagine" evidence="3">
    <location>
        <position position="468"/>
    </location>
</feature>
<feature type="disulfide bond" evidence="4">
    <location>
        <begin position="33"/>
        <end position="94"/>
    </location>
</feature>
<feature type="disulfide bond" evidence="4">
    <location>
        <begin position="41"/>
        <end position="87"/>
    </location>
</feature>
<feature type="disulfide bond" evidence="4">
    <location>
        <begin position="78"/>
        <end position="116"/>
    </location>
</feature>
<feature type="disulfide bond" evidence="4">
    <location>
        <begin position="105"/>
        <end position="146"/>
    </location>
</feature>
<feature type="disulfide bond" evidence="4">
    <location>
        <begin position="109"/>
        <end position="133"/>
    </location>
</feature>
<accession>P58421</accession>
<protein>
    <recommendedName>
        <fullName>Frizzled-5</fullName>
        <shortName>Fz-5</shortName>
        <shortName>Xfz5</shortName>
    </recommendedName>
</protein>
<reference key="1">
    <citation type="journal article" date="2001" name="Mech. Dev.">
        <title>Xenopus frizzled-5: a frizzled family member expressed exclusively in the neural retina of the developing eye.</title>
        <authorList>
            <person name="Sumanas S."/>
            <person name="Ekker S.C."/>
        </authorList>
    </citation>
    <scope>NUCLEOTIDE SEQUENCE [MRNA]</scope>
    <scope>TISSUE SPECIFICITY</scope>
    <scope>DEVELOPMENTAL STAGE</scope>
</reference>
<proteinExistence type="evidence at transcript level"/>
<dbReference type="EMBL" id="AF300716">
    <property type="protein sequence ID" value="AAK51688.1"/>
    <property type="molecule type" value="mRNA"/>
</dbReference>
<dbReference type="RefSeq" id="NP_001079217.1">
    <property type="nucleotide sequence ID" value="NM_001085748.1"/>
</dbReference>
<dbReference type="SMR" id="P58421"/>
<dbReference type="GlyCosmos" id="P58421">
    <property type="glycosylation" value="3 sites, No reported glycans"/>
</dbReference>
<dbReference type="GeneID" id="373834"/>
<dbReference type="KEGG" id="xla:373834"/>
<dbReference type="AGR" id="Xenbase:XB-GENE-865299"/>
<dbReference type="CTD" id="373834"/>
<dbReference type="Xenbase" id="XB-GENE-865299">
    <property type="gene designation" value="fzd5.S"/>
</dbReference>
<dbReference type="OrthoDB" id="10053709at2759"/>
<dbReference type="Proteomes" id="UP000186698">
    <property type="component" value="Chromosome 9_10S"/>
</dbReference>
<dbReference type="Bgee" id="373834">
    <property type="expression patterns" value="Expressed in intestine and 15 other cell types or tissues"/>
</dbReference>
<dbReference type="GO" id="GO:0000139">
    <property type="term" value="C:Golgi membrane"/>
    <property type="evidence" value="ECO:0007669"/>
    <property type="project" value="UniProtKB-SubCell"/>
</dbReference>
<dbReference type="GO" id="GO:0005886">
    <property type="term" value="C:plasma membrane"/>
    <property type="evidence" value="ECO:0000318"/>
    <property type="project" value="GO_Central"/>
</dbReference>
<dbReference type="GO" id="GO:0004930">
    <property type="term" value="F:G protein-coupled receptor activity"/>
    <property type="evidence" value="ECO:0007669"/>
    <property type="project" value="UniProtKB-KW"/>
</dbReference>
<dbReference type="GO" id="GO:0042813">
    <property type="term" value="F:Wnt receptor activity"/>
    <property type="evidence" value="ECO:0000318"/>
    <property type="project" value="GO_Central"/>
</dbReference>
<dbReference type="GO" id="GO:0017147">
    <property type="term" value="F:Wnt-protein binding"/>
    <property type="evidence" value="ECO:0000318"/>
    <property type="project" value="GO_Central"/>
</dbReference>
<dbReference type="GO" id="GO:0043010">
    <property type="term" value="P:camera-type eye development"/>
    <property type="evidence" value="ECO:0000304"/>
    <property type="project" value="AgBase"/>
</dbReference>
<dbReference type="GO" id="GO:0060070">
    <property type="term" value="P:canonical Wnt signaling pathway"/>
    <property type="evidence" value="ECO:0000318"/>
    <property type="project" value="GO_Central"/>
</dbReference>
<dbReference type="GO" id="GO:0048666">
    <property type="term" value="P:neuron development"/>
    <property type="evidence" value="ECO:0000304"/>
    <property type="project" value="AgBase"/>
</dbReference>
<dbReference type="GO" id="GO:0035567">
    <property type="term" value="P:non-canonical Wnt signaling pathway"/>
    <property type="evidence" value="ECO:0000318"/>
    <property type="project" value="GO_Central"/>
</dbReference>
<dbReference type="GO" id="GO:0045595">
    <property type="term" value="P:regulation of cell differentiation"/>
    <property type="evidence" value="ECO:0000304"/>
    <property type="project" value="AgBase"/>
</dbReference>
<dbReference type="GO" id="GO:0042127">
    <property type="term" value="P:regulation of cell population proliferation"/>
    <property type="evidence" value="ECO:0000304"/>
    <property type="project" value="AgBase"/>
</dbReference>
<dbReference type="CDD" id="cd15249">
    <property type="entry name" value="7tmF_FZD5"/>
    <property type="match status" value="1"/>
</dbReference>
<dbReference type="FunFam" id="1.10.2000.10:FF:000004">
    <property type="entry name" value="Frizzled class receptor 8a"/>
    <property type="match status" value="1"/>
</dbReference>
<dbReference type="FunFam" id="1.20.1070.10:FF:000053">
    <property type="entry name" value="Frizzled class receptor 8a"/>
    <property type="match status" value="1"/>
</dbReference>
<dbReference type="Gene3D" id="1.10.2000.10">
    <property type="entry name" value="Frizzled cysteine-rich domain"/>
    <property type="match status" value="1"/>
</dbReference>
<dbReference type="Gene3D" id="1.20.1070.10">
    <property type="entry name" value="Rhodopsin 7-helix transmembrane proteins"/>
    <property type="match status" value="1"/>
</dbReference>
<dbReference type="InterPro" id="IPR015526">
    <property type="entry name" value="Frizzled/SFRP"/>
</dbReference>
<dbReference type="InterPro" id="IPR000539">
    <property type="entry name" value="Frizzled/Smoothened_7TM"/>
</dbReference>
<dbReference type="InterPro" id="IPR020067">
    <property type="entry name" value="Frizzled_dom"/>
</dbReference>
<dbReference type="InterPro" id="IPR036790">
    <property type="entry name" value="Frizzled_dom_sf"/>
</dbReference>
<dbReference type="InterPro" id="IPR017981">
    <property type="entry name" value="GPCR_2-like_7TM"/>
</dbReference>
<dbReference type="PANTHER" id="PTHR11309">
    <property type="entry name" value="FRIZZLED"/>
    <property type="match status" value="1"/>
</dbReference>
<dbReference type="PANTHER" id="PTHR11309:SF136">
    <property type="entry name" value="FRIZZLED-5"/>
    <property type="match status" value="1"/>
</dbReference>
<dbReference type="Pfam" id="PF01534">
    <property type="entry name" value="Frizzled"/>
    <property type="match status" value="1"/>
</dbReference>
<dbReference type="Pfam" id="PF01392">
    <property type="entry name" value="Fz"/>
    <property type="match status" value="1"/>
</dbReference>
<dbReference type="PRINTS" id="PR00489">
    <property type="entry name" value="FRIZZLED"/>
</dbReference>
<dbReference type="SMART" id="SM00063">
    <property type="entry name" value="FRI"/>
    <property type="match status" value="1"/>
</dbReference>
<dbReference type="SMART" id="SM01330">
    <property type="entry name" value="Frizzled"/>
    <property type="match status" value="1"/>
</dbReference>
<dbReference type="SUPFAM" id="SSF63501">
    <property type="entry name" value="Frizzled cysteine-rich domain"/>
    <property type="match status" value="1"/>
</dbReference>
<dbReference type="PROSITE" id="PS50038">
    <property type="entry name" value="FZ"/>
    <property type="match status" value="1"/>
</dbReference>
<dbReference type="PROSITE" id="PS50261">
    <property type="entry name" value="G_PROTEIN_RECEP_F2_4"/>
    <property type="match status" value="1"/>
</dbReference>
<sequence length="559" mass="63518">MGSFRSGVFALSFVVLLLDYFAPAQAASKAIVCQEITVPMCKGIGYNHTYMPNQFNHDTQDEAGMEVHQFWPLVVIQCSLDLKFFLCSMYTPICLPDYRKPLPPCRSVCERAKAGCSPLMRKYGFAWPERMNCDRLPEHGDPDTLCMYYNWTETTTTLPPTHPPKVKTPTSDCDGVCKCREPFVSITRESHPLYNRIKTGQVPNCAMPCFQPYFTQDEKMFVTFWIGLWSILCFISTFTTVATFLIDMERFRYPERPIIFLSACYLFVSIGYVVRLIVGHENVACNKDHIHYETTGPALCTIVFLLIYFFGMASSIWWVILTFTWFLAAGMKWGNEAIASYSQYFHMAAWLIPSVKSIAVLALSSVDGDPVAGICYVGNQNLDNLRGFVLAPLVVYLFSGTMFLLAGFVSLFRIRSVIKQGGTKTDKLEKLMIRIGIFSVLYTVPATIVVACYIYEQHYREHWEKTHNCSCPGDKQRYRPDYAVFMLKYLMCLVVGITSGVWIWSGKTLESWKRFTGRCCRNSKPINASAYSEASRALTPRTGLSNLTLPHKQVPLSHV</sequence>
<evidence type="ECO:0000250" key="1"/>
<evidence type="ECO:0000250" key="2">
    <source>
        <dbReference type="UniProtKB" id="Q9EQD0"/>
    </source>
</evidence>
<evidence type="ECO:0000255" key="3"/>
<evidence type="ECO:0000255" key="4">
    <source>
        <dbReference type="PROSITE-ProRule" id="PRU00090"/>
    </source>
</evidence>
<evidence type="ECO:0000269" key="5">
    <source>
    </source>
</evidence>
<evidence type="ECO:0000305" key="6"/>
<gene>
    <name type="primary">fzd5</name>
    <name type="synonym">fz5</name>
</gene>